<name>GVPA1_HALSA</name>
<gene>
    <name evidence="26 38" type="primary">gvpA</name>
    <name evidence="27" type="synonym">p-gvpA</name>
    <name evidence="24" type="synonym">p-vac</name>
    <name type="ordered locus">VNG_5030G</name>
</gene>
<gene>
    <name evidence="1 39" type="primary">gvpA1</name>
    <name evidence="39" type="ordered locus">VNG_6029G</name>
</gene>
<geneLocation type="plasmid">
    <name>pNRC100</name>
</geneLocation>
<geneLocation type="plasmid">
    <name>pNRC200</name>
</geneLocation>
<geneLocation type="plasmid">
    <name>pHH1</name>
</geneLocation>
<keyword id="KW-0903">Direct protein sequencing</keyword>
<keyword id="KW-0304">Gas vesicle</keyword>
<keyword id="KW-0614">Plasmid</keyword>
<keyword id="KW-1185">Reference proteome</keyword>
<evidence type="ECO:0000255" key="1">
    <source>
        <dbReference type="HAMAP-Rule" id="MF_00576"/>
    </source>
</evidence>
<evidence type="ECO:0000269" key="2">
    <source>
    </source>
</evidence>
<evidence type="ECO:0000269" key="3">
    <source>
    </source>
</evidence>
<evidence type="ECO:0000269" key="4">
    <source>
    </source>
</evidence>
<evidence type="ECO:0000269" key="5">
    <source>
    </source>
</evidence>
<evidence type="ECO:0000269" key="6">
    <source>
    </source>
</evidence>
<evidence type="ECO:0000269" key="7">
    <source>
    </source>
</evidence>
<evidence type="ECO:0000269" key="8">
    <source>
    </source>
</evidence>
<evidence type="ECO:0000269" key="9">
    <source>
    </source>
</evidence>
<evidence type="ECO:0000269" key="10">
    <source>
    </source>
</evidence>
<evidence type="ECO:0000269" key="11">
    <source>
    </source>
</evidence>
<evidence type="ECO:0000269" key="12">
    <source>
    </source>
</evidence>
<evidence type="ECO:0000269" key="13">
    <source>
    </source>
</evidence>
<evidence type="ECO:0000269" key="14">
    <source>
    </source>
</evidence>
<evidence type="ECO:0000269" key="15">
    <source>
    </source>
</evidence>
<evidence type="ECO:0000269" key="16">
    <source>
    </source>
</evidence>
<evidence type="ECO:0000269" key="17">
    <source>
    </source>
</evidence>
<evidence type="ECO:0000269" key="18">
    <source>
    </source>
</evidence>
<evidence type="ECO:0000269" key="19">
    <source>
    </source>
</evidence>
<evidence type="ECO:0000269" key="20">
    <source>
    </source>
</evidence>
<evidence type="ECO:0000269" key="21">
    <source>
    </source>
</evidence>
<evidence type="ECO:0000269" key="22">
    <source>
    </source>
</evidence>
<evidence type="ECO:0000269" key="23">
    <source ref="10"/>
</evidence>
<evidence type="ECO:0000303" key="24">
    <source>
    </source>
</evidence>
<evidence type="ECO:0000303" key="25">
    <source>
    </source>
</evidence>
<evidence type="ECO:0000303" key="26">
    <source>
    </source>
</evidence>
<evidence type="ECO:0000303" key="27">
    <source>
    </source>
</evidence>
<evidence type="ECO:0000303" key="28">
    <source ref="10"/>
</evidence>
<evidence type="ECO:0000305" key="29"/>
<evidence type="ECO:0000305" key="30">
    <source>
    </source>
</evidence>
<evidence type="ECO:0000305" key="31">
    <source>
    </source>
</evidence>
<evidence type="ECO:0000305" key="32">
    <source>
    </source>
</evidence>
<evidence type="ECO:0000305" key="33">
    <source>
    </source>
</evidence>
<evidence type="ECO:0000305" key="34">
    <source>
    </source>
</evidence>
<evidence type="ECO:0000305" key="35">
    <source>
    </source>
</evidence>
<evidence type="ECO:0000305" key="36">
    <source>
    </source>
</evidence>
<evidence type="ECO:0000312" key="37">
    <source>
        <dbReference type="EMBL" id="AAA98196.1"/>
    </source>
</evidence>
<evidence type="ECO:0000312" key="38">
    <source>
        <dbReference type="EMBL" id="AAC82809.1"/>
    </source>
</evidence>
<evidence type="ECO:0000312" key="39">
    <source>
        <dbReference type="EMBL" id="AAG20726.1"/>
    </source>
</evidence>
<evidence type="ECO:0000312" key="40">
    <source>
        <dbReference type="EMBL" id="CAA31340.1"/>
    </source>
</evidence>
<evidence type="ECO:0000312" key="41">
    <source>
        <dbReference type="EMBL" id="CAA33434.1"/>
    </source>
</evidence>
<evidence type="ECO:0000312" key="42">
    <source>
        <dbReference type="EMBL" id="CAA40450.1"/>
    </source>
</evidence>
<evidence type="ECO:0000312" key="43">
    <source>
        <dbReference type="EMBL" id="CAA68593.1"/>
    </source>
</evidence>
<accession>P08958</accession>
<accession>P07831</accession>
<accession>Q9HI18</accession>
<dbReference type="EMBL" id="Y00534">
    <property type="protein sequence ID" value="CAA68593.1"/>
    <property type="molecule type" value="Genomic_DNA"/>
</dbReference>
<dbReference type="EMBL" id="X12863">
    <property type="protein sequence ID" value="CAA31340.1"/>
    <property type="molecule type" value="Genomic_DNA"/>
</dbReference>
<dbReference type="EMBL" id="X15374">
    <property type="protein sequence ID" value="CAA33434.1"/>
    <property type="molecule type" value="Genomic_DNA"/>
</dbReference>
<dbReference type="EMBL" id="M58557">
    <property type="protein sequence ID" value="AAA98196.1"/>
    <property type="molecule type" value="Genomic_DNA"/>
</dbReference>
<dbReference type="EMBL" id="X57161">
    <property type="protein sequence ID" value="CAA40450.1"/>
    <property type="molecule type" value="Genomic_DNA"/>
</dbReference>
<dbReference type="EMBL" id="X64729">
    <property type="protein sequence ID" value="CAA45980.1"/>
    <property type="molecule type" value="Genomic_DNA"/>
</dbReference>
<dbReference type="EMBL" id="AF016485">
    <property type="protein sequence ID" value="AAC82809.1"/>
    <property type="molecule type" value="Genomic_DNA"/>
</dbReference>
<dbReference type="EMBL" id="AE004438">
    <property type="protein sequence ID" value="AAG20726.1"/>
    <property type="molecule type" value="Genomic_DNA"/>
</dbReference>
<dbReference type="PIR" id="B27740">
    <property type="entry name" value="B27740"/>
</dbReference>
<dbReference type="PIR" id="S01423">
    <property type="entry name" value="S01423"/>
</dbReference>
<dbReference type="PIR" id="S07323">
    <property type="entry name" value="S07323"/>
</dbReference>
<dbReference type="PIR" id="T08242">
    <property type="entry name" value="T08242"/>
</dbReference>
<dbReference type="RefSeq" id="WP_010890519.1">
    <property type="nucleotide sequence ID" value="NZ_BK010831.1"/>
</dbReference>
<dbReference type="SMR" id="P08958"/>
<dbReference type="GeneID" id="72745644"/>
<dbReference type="KEGG" id="hal:gvpA"/>
<dbReference type="KEGG" id="hal:VNG_6029G"/>
<dbReference type="PATRIC" id="fig|64091.14.peg.2099"/>
<dbReference type="HOGENOM" id="CLU_169045_1_0_2"/>
<dbReference type="InParanoid" id="P08958"/>
<dbReference type="OrthoDB" id="187177at2157"/>
<dbReference type="PhylomeDB" id="P08958"/>
<dbReference type="Proteomes" id="UP000000554">
    <property type="component" value="Plasmid pNRC100"/>
</dbReference>
<dbReference type="Proteomes" id="UP000000554">
    <property type="component" value="Plasmid pNRC200"/>
</dbReference>
<dbReference type="GO" id="GO:0033172">
    <property type="term" value="C:gas vesicle shell"/>
    <property type="evidence" value="ECO:0007669"/>
    <property type="project" value="UniProtKB-UniRule"/>
</dbReference>
<dbReference type="GO" id="GO:0012506">
    <property type="term" value="C:vesicle membrane"/>
    <property type="evidence" value="ECO:0007669"/>
    <property type="project" value="InterPro"/>
</dbReference>
<dbReference type="GO" id="GO:0005198">
    <property type="term" value="F:structural molecule activity"/>
    <property type="evidence" value="ECO:0007669"/>
    <property type="project" value="InterPro"/>
</dbReference>
<dbReference type="HAMAP" id="MF_00576">
    <property type="entry name" value="Gas_vesicle_A"/>
    <property type="match status" value="1"/>
</dbReference>
<dbReference type="InterPro" id="IPR000638">
    <property type="entry name" value="Gas-vesicle_GvpA-like"/>
</dbReference>
<dbReference type="InterPro" id="IPR047870">
    <property type="entry name" value="Gas_vesicle_GvpA"/>
</dbReference>
<dbReference type="InterPro" id="IPR050530">
    <property type="entry name" value="GvpA"/>
</dbReference>
<dbReference type="InterPro" id="IPR018493">
    <property type="entry name" value="GvpA-like_CS"/>
</dbReference>
<dbReference type="NCBIfam" id="NF046092">
    <property type="entry name" value="halo_gas_GvpA"/>
    <property type="match status" value="1"/>
</dbReference>
<dbReference type="NCBIfam" id="NF006874">
    <property type="entry name" value="PRK09371.1"/>
    <property type="match status" value="1"/>
</dbReference>
<dbReference type="PANTHER" id="PTHR35344:SF4">
    <property type="entry name" value="GAS VESICLE PROTEIN A1"/>
    <property type="match status" value="1"/>
</dbReference>
<dbReference type="PANTHER" id="PTHR35344">
    <property type="entry name" value="GAS VESICLE STRUCTURAL PROTEIN 2-RELATED"/>
    <property type="match status" value="1"/>
</dbReference>
<dbReference type="Pfam" id="PF00741">
    <property type="entry name" value="Gas_vesicle"/>
    <property type="match status" value="1"/>
</dbReference>
<dbReference type="PROSITE" id="PS00234">
    <property type="entry name" value="GAS_VESICLE_A_1"/>
    <property type="match status" value="1"/>
</dbReference>
<dbReference type="PROSITE" id="PS00669">
    <property type="entry name" value="GAS_VESICLE_A_2"/>
    <property type="match status" value="1"/>
</dbReference>
<comment type="function">
    <text evidence="4 8 9 11 12 16 23">Gas vesicles are hollow, gas filled proteinaceous nanostructures found in several microbial planktonic microorganisms. They allow positioning of halobacteria at the optimal depth for growth in the poorly aerated shallow brine pools of their habitat. GvpA forms the protein shell (PubMed:1956294, PubMed:2586485, PubMed:28898511, PubMed:33711860, Ref.10). The critical collapse pressure (CCP) of p-vac gas vesicles is 0.66 MPa; mutating residues in p-gvpA to those found in c-gvpA increases the CCP. These residues partially and independently control the width and strength of gas vesicles (PubMed:12167531). In stationary phase gas vesicles, about 30 times more GvpA1 is found than GvpA2 (PubMed:21158390).</text>
</comment>
<comment type="function">
    <text evidence="2 4 5 6 10 14 19 20 21">Expression of a 9.5 kb p-vac DNA fragment containing 2 divergently transcribed regions (gvpD-gvpE-gvpF-gvpG-gvpH-gvpI-gvpJ-gvpK-gvpL-gvpM and gvpA-gvpC-gvpN-gvpO) allows H.volcanii to produce gas vesicles. All site-directed mutagenesis is tested in H.volcanii (PubMed:10894744, PubMed:12167531, PubMed:1404376, PubMed:21542854, PubMed:33281806, PubMed:7651141). A minimal gas vesicle can be made in H.volcanii by gvpA1-gvpO1 plus gvpF1-gvpG1-gvpJ1-gvpK1-gvpL1-gvpM1; lack of enough GvpJ1 prevents their formation (PubMed:10894744). A similar region restores gas vesicle production in H.halobium without the p-vac locus, but it still has the c-vac locus (PubMed:1398080, PubMed:8002589, PubMed:8423144).</text>
</comment>
<comment type="subunit">
    <text evidence="14 18 22 30 32 33 34 35 36">Major component of the gas vesicle shell which is 2 nm thick and consists of a single layer of the protein. It forms 4.6 nm-wide ribs nearly perpendicular to the long axis of the vesicle (Probable) (PubMed:8606186, PubMed:978738). Modeled as antiparallel homodimers (Probable) (PubMed:21542854, PubMed:28898511). The ribs form a low-pitch helix rather than a stack of hoops (PubMed:9611808). Interacts with GvpF1 via its N-terminus (residues 1-43) in early growth stages, none of the other GvpG1 to GvpM1 proteins were seen to directly bind GvpA1 in H.volcanii experiments (PubMed:33281806, PubMed:34975818). Might interact with GvpJ1 (Probable) (PubMed:34975818). Might interact with GvpG1, GvpH1, GvpJ1, GvpM1, GvpN1 and GvpO1 (Probable) (PubMed:35966690).</text>
</comment>
<comment type="subcellular location">
    <subcellularLocation>
        <location evidence="1 7 9 10 21 23">Gas vesicle shell</location>
    </subcellularLocation>
    <text evidence="7">Both the N- and C-termini of the protein (but not interior sequences between Ser-5 and Gl-55) are accessible to proteases; gas vesicles collapse after trypsin treatment.</text>
</comment>
<comment type="induction">
    <text evidence="8 11 13 16 17">Expressed as a probable monocistronic transcript in mid-log phase (PubMed:3448465). Expressed more highly than the gvpA2 (c-vac) transcript at mid-log phase (PubMed:3185512). Maximally transcribed in late log phase (PubMed:1956294). In 'wild-type' cells (probably NRC-1/NRL) gas vesicles are seen at all stages of growth; in standing cultures, cells float. In this study gvpA2 (c-vac) was not detectably transcribed, while gvpA1 (p-vac) was transcribed at high levels during log growth and decreased in stationary phase. Presumably most to all gas vesicles are derived from this p-vac locus. If the p-vac locus is deleted gas vesicles appear during early stationary phase, but fewer vesicles are detected (PubMed:2586485). Gas vesicles appear earlier when grown in static culture, possibly due to O(2)-limitation (PubMed:33711860).</text>
</comment>
<comment type="domain">
    <text evidence="12 30 31 32">Experimental and modeling studies suggest an alpha-helix beta-sheet beta-sheet alpha-helix structure; the protein is insoluble in all media tested. It is thought the beta-strands form the hydrophobic interior surface, while the alpha-helices form the exterior (Probable) (PubMed:21542854, PubMed:22580065, PubMed:28898511). Extensive mutagenesis shows that many mutations leading to loss of gas vesicles are probably on the exterior of the gas vesicle. Arg-15 and other nearby residues (Leu-9 to Arg-19, modeled as alpha helix 1 on the exterior) are essential for gas vesicle formation, perhaps by forming salt bridges with adjacent monomers. The beta-sheet region (residues Val-23 to Leu-31 and Glu-35 to Val-43 with a beta-turn Val-32 Gly-33 Ile-34) may line the interior forming internal contacts between monomers; the hydrophobic surface is thought to minimize water condensation. Many mutations between Leu-31 and Thr-38 result in long, cylindrical vesicles that span the whole cell; Gly-33 in the beta-turn cannot be mutated to Val. Mutations in the second amphiphilic helix (Val-48 to Thr-67, modeled on the exterior) are in general less mutagenic than those in helix 1; Tyr-54, predicted to be on the exterior of the gas vesicle, must aromatic for gas vesicles to form. A few mutations make many small gas vesicles (at Asp-5, Arg-28, Glu-57, Lys-60 and Ile-61); they may have stalled early in gas vesicle formation (PubMed:28898511).</text>
</comment>
<comment type="mass spectrometry"/>
<comment type="disruption phenotype">
    <text evidence="2 8 19 20">No gas vesicles are made.</text>
</comment>
<comment type="biotechnology">
    <text evidence="3">Can be used for presentation of peptidyl epitopes in the mammalian immune system. Purified gas vesicles when conjugated with 2,4,6-trinitrobenzene sulfonic acid (TNBS) yield trinitrophenol-modified gas vesicles (presumably most modification occurs on GvpA) that elicts strong antibody responses without the injection of extra adjuvant.</text>
</comment>
<comment type="miscellaneous">
    <text evidence="13">The 'chromosomal' gene (c-vac, gvpA2) is only expressed during the stationary phase of growth, while this plasmid encoded gene (p-vac, gvpA1) is transcribed constitutively throughout the growth cycle.</text>
</comment>
<comment type="miscellaneous">
    <text evidence="6 8 11 16 22">Encoded in a 14-gene plasmid locus called p-vac which produces predominantly short, spindle-shaped gas vesicles during all stages of growth.</text>
</comment>
<comment type="similarity">
    <text evidence="1">Belongs to the gas vesicle GvpA family.</text>
</comment>
<proteinExistence type="evidence at protein level"/>
<sequence>MAQPDSSGLAEVLDRVLDKGVVVDVWARVSLVGIEILTVEARVVAASVDTFLHYAEEIAKIEQAELTAGAEAAPEA</sequence>
<organism>
    <name type="scientific">Halobacterium salinarum (strain ATCC 700922 / JCM 11081 / NRC-1)</name>
    <name type="common">Halobacterium halobium</name>
    <dbReference type="NCBI Taxonomy" id="64091"/>
    <lineage>
        <taxon>Archaea</taxon>
        <taxon>Methanobacteriati</taxon>
        <taxon>Methanobacteriota</taxon>
        <taxon>Stenosarchaea group</taxon>
        <taxon>Halobacteria</taxon>
        <taxon>Halobacteriales</taxon>
        <taxon>Halobacteriaceae</taxon>
        <taxon>Halobacterium</taxon>
        <taxon>Halobacterium salinarum NRC-34001</taxon>
    </lineage>
</organism>
<reference evidence="43" key="1">
    <citation type="journal article" date="1987" name="Mol. Microbiol.">
        <title>A plasmid-encoded gas vesicle protein gene in a halophilic archaebacterium.</title>
        <authorList>
            <person name="Dassarma S."/>
            <person name="Damerval T."/>
            <person name="Jones J.G."/>
            <person name="Tandeau de Marsac N."/>
        </authorList>
    </citation>
    <scope>NUCLEOTIDE SEQUENCE [GENOMIC DNA]</scope>
    <scope>INDUCTION</scope>
    <source>
        <strain>ATCC 700922 / JCM 11081 / NRC-1</strain>
        <plasmid>pNRC100</plasmid>
    </source>
</reference>
<reference key="2">
    <citation type="journal article" date="1988" name="J. Bacteriol.">
        <title>Evidence for two different gas vesicle proteins and genes in Halobacterium halobium.</title>
        <authorList>
            <person name="Surek B."/>
            <person name="Pillay B."/>
            <person name="Rdest U."/>
            <person name="Beyreuther K."/>
            <person name="Goebel W."/>
        </authorList>
    </citation>
    <scope>NUCLEOTIDE SEQUENCE [GENOMIC DNA]</scope>
    <scope>PROTEIN SEQUENCE OF 2-41</scope>
    <source>
        <strain>DSM 670</strain>
        <strain>NRL</strain>
    </source>
</reference>
<reference evidence="40" key="3">
    <citation type="journal article" date="1988" name="Mol. Gen. Genet.">
        <title>Two genes encoding gas vacuole proteins in Halobacterium halobium.</title>
        <authorList>
            <person name="Horne M."/>
            <person name="Englert C."/>
            <person name="Pfeifer F."/>
        </authorList>
    </citation>
    <scope>NUCLEOTIDE SEQUENCE [GENOMIC DNA]</scope>
    <scope>INDUCTION</scope>
    <source>
        <strain>NRC-817</strain>
        <plasmid>pHH1</plasmid>
    </source>
</reference>
<reference evidence="41" key="4">
    <citation type="journal article" date="1989" name="Nucleic Acids Res.">
        <title>Analysis of insertion mutants reveals two new genes in the pNRC100 gas vesicle gene cluster of Halobacterium halobium.</title>
        <authorList>
            <person name="Jones J.G."/>
            <person name="Hackett N.R."/>
            <person name="Halladay J.T."/>
            <person name="Scothorn D.J."/>
            <person name="Yang C.-F."/>
            <person name="Ng W.-L."/>
            <person name="Dassarma S."/>
        </authorList>
    </citation>
    <scope>NUCLEOTIDE SEQUENCE [GENOMIC DNA]</scope>
    <source>
        <strain>ATCC 700922 / JCM 11081 / NRC-1</strain>
        <plasmid>pNRC100</plasmid>
    </source>
</reference>
<reference evidence="37" key="5">
    <citation type="journal article" date="1991" name="Gene">
        <title>Structure and organization of the gas vesicle gene cluster on the Halobacterium halobium plasmid pNRC100.</title>
        <authorList>
            <person name="Jones J.G."/>
            <person name="Young D.C."/>
            <person name="Dassarma S."/>
        </authorList>
    </citation>
    <scope>NUCLEOTIDE SEQUENCE [GENOMIC DNA]</scope>
    <source>
        <strain>ATCC 700922 / JCM 11081 / NRC-1</strain>
        <plasmid>pNRC100</plasmid>
    </source>
</reference>
<reference evidence="42" key="6">
    <citation type="journal article" date="1991" name="Mol. Microbiol.">
        <title>A DNA region of 9 kbp contains all genes necessary for gas vesicle synthesis in halophilic archaebacteria.</title>
        <authorList>
            <person name="Horne M."/>
            <person name="Englert C."/>
            <person name="Wimmer C."/>
            <person name="Pfeifer F."/>
        </authorList>
    </citation>
    <scope>NUCLEOTIDE SEQUENCE [GENOMIC DNA]</scope>
    <scope>FUNCTION</scope>
    <scope>INDUCTION</scope>
    <scope>DISRUPTION PHENOTYPE</scope>
    <source>
        <strain>NRC-817</strain>
        <plasmid>pHH1</plasmid>
    </source>
</reference>
<reference key="7">
    <citation type="journal article" date="1992" name="J. Mol. Biol.">
        <title>Three different but related gene clusters encoding gas vesicles in halophilic archaea.</title>
        <authorList>
            <person name="Englert C."/>
            <person name="Krueger K."/>
            <person name="Offner S."/>
            <person name="Pfeifer F."/>
        </authorList>
    </citation>
    <scope>NUCLEOTIDE SEQUENCE [GENOMIC DNA]</scope>
    <scope>GAS VESICLE GENE CLUSTER</scope>
    <source>
        <strain>NRC-817</strain>
        <plasmid>pHH1</plasmid>
    </source>
</reference>
<reference key="8">
    <citation type="journal article" date="1998" name="Genome Res.">
        <title>Snapshot of a large dynamic replicon in a halophilic archaeon: megaplasmid or minichromosome?</title>
        <authorList>
            <person name="Ng W.V."/>
            <person name="Ciufo S.A."/>
            <person name="Smith T.M."/>
            <person name="Bumgarner R.E."/>
            <person name="Baskin D."/>
            <person name="Faust J."/>
            <person name="Hall B."/>
            <person name="Loretz C."/>
            <person name="Seto J."/>
            <person name="Slagel J."/>
            <person name="Hood L."/>
            <person name="DasSarma S."/>
        </authorList>
    </citation>
    <scope>NUCLEOTIDE SEQUENCE [LARGE SCALE GENOMIC DNA]</scope>
    <source>
        <strain>ATCC 700922 / JCM 11081 / NRC-1</strain>
        <plasmid>pNRC100</plasmid>
    </source>
</reference>
<reference evidence="39" key="9">
    <citation type="journal article" date="2000" name="Proc. Natl. Acad. Sci. U.S.A.">
        <title>Genome sequence of Halobacterium species NRC-1.</title>
        <authorList>
            <person name="Ng W.V."/>
            <person name="Kennedy S.P."/>
            <person name="Mahairas G.G."/>
            <person name="Berquist B."/>
            <person name="Pan M."/>
            <person name="Shukla H.D."/>
            <person name="Lasky S.R."/>
            <person name="Baliga N.S."/>
            <person name="Thorsson V."/>
            <person name="Sbrogna J."/>
            <person name="Swartzell S."/>
            <person name="Weir D."/>
            <person name="Hall J."/>
            <person name="Dahl T.A."/>
            <person name="Welti R."/>
            <person name="Goo Y.A."/>
            <person name="Leithauser B."/>
            <person name="Keller K."/>
            <person name="Cruz R."/>
            <person name="Danson M.J."/>
            <person name="Hough D.W."/>
            <person name="Maddocks D.G."/>
            <person name="Jablonski P.E."/>
            <person name="Krebs M.P."/>
            <person name="Angevine C.M."/>
            <person name="Dale H."/>
            <person name="Isenbarger T.A."/>
            <person name="Peck R.F."/>
            <person name="Pohlschroder M."/>
            <person name="Spudich J.L."/>
            <person name="Jung K.-H."/>
            <person name="Alam M."/>
            <person name="Freitas T."/>
            <person name="Hou S."/>
            <person name="Daniels C.J."/>
            <person name="Dennis P.P."/>
            <person name="Omer A.D."/>
            <person name="Ebhardt H."/>
            <person name="Lowe T.M."/>
            <person name="Liang P."/>
            <person name="Riley M."/>
            <person name="Hood L."/>
            <person name="DasSarma S."/>
        </authorList>
    </citation>
    <scope>NUCLEOTIDE SEQUENCE [LARGE SCALE GENOMIC DNA]</scope>
    <source>
        <strain>ATCC 700922 / JCM 11081 / NRC-1</strain>
        <plasmid>pNRC200</plasmid>
    </source>
</reference>
<reference key="10">
    <citation type="journal article" date="1984" name="J. Gen. Microbiol.">
        <title>Homology of gas vesicle proteins in cyanobacteria and halobacteria.</title>
        <authorList>
            <person name="Walker J.E."/>
            <person name="Hayes P.K."/>
            <person name="Walsby A.E."/>
        </authorList>
    </citation>
    <scope>PROTEIN SEQUENCE OF 2-44</scope>
    <scope>FUNCTION</scope>
    <scope>SUBCELLULAR LOCATION</scope>
    <source>
        <strain>NRL</strain>
    </source>
</reference>
<reference key="11">
    <citation type="journal article" date="1976" name="J. Mol. Biol.">
        <title>Structure of the wall of Halobacterium halobium gas vesicles.</title>
        <authorList>
            <person name="Blaurock A.E."/>
            <person name="Wober W."/>
        </authorList>
    </citation>
    <scope>SUBUNIT</scope>
    <source>
        <strain>NRL</strain>
    </source>
</reference>
<reference key="12">
    <citation type="journal article" date="1989" name="Mol. Gen. Genet.">
        <title>Expression of two gas vacuole protein genes in Halobacterium halobium and other related species.</title>
        <authorList>
            <person name="Horne M."/>
            <person name="Pfeifer F."/>
        </authorList>
    </citation>
    <scope>FUNCTION</scope>
    <scope>GAS VESICLE PRODUCTION</scope>
    <scope>INDUCTION</scope>
    <source>
        <strain>NRC-817</strain>
    </source>
</reference>
<reference key="13">
    <citation type="journal article" date="1992" name="Gene">
        <title>Genetic transformation of a halophilic archaebacterium with a gas vesicle gene cluster restores its ability to float.</title>
        <authorList>
            <person name="Halladay J.T."/>
            <person name="Ng W.L."/>
            <person name="DasSarma S."/>
        </authorList>
    </citation>
    <scope>FUNCTION</scope>
    <scope>GAS VESICLE PRODUCTION</scope>
    <source>
        <strain>ATCC 700922 / JCM 11081 / NRC-1</strain>
        <plasmid>pNRC100</plasmid>
    </source>
</reference>
<reference key="14">
    <citation type="journal article" date="1993" name="J. Bacteriol.">
        <title>The rightward gas vesicle operon in Halobacterium plasmid pNRC100: identification of the gvpA and gvpC gene products by use of antibody probes and genetic analysis of the region downstream of gvpC.</title>
        <authorList>
            <person name="Halladay J.T."/>
            <person name="Jones J.G."/>
            <person name="Lin F."/>
            <person name="Macdonald A.B."/>
            <person name="Dassarma S."/>
        </authorList>
    </citation>
    <scope>SUBCELLULAR LOCATION</scope>
    <scope>INDUCTION</scope>
    <source>
        <strain>ATCC 700922 / JCM 11081 / NRC-1</strain>
        <plasmid>pNRC100</plasmid>
    </source>
</reference>
<reference key="15">
    <citation type="journal article" date="1994" name="J. Bacteriol.">
        <title>Wild-type gas vesicle formation requires at least ten genes in the gvp gene cluster of Halobacterium halobium plasmid pNRC100.</title>
        <authorList>
            <person name="DasSarma S."/>
            <person name="Arora P."/>
            <person name="Lin F."/>
            <person name="Molinari E."/>
            <person name="Yin L.R."/>
        </authorList>
    </citation>
    <scope>DISRUPTION PHENOTYPE</scope>
    <source>
        <strain>ATCC 700922 / JCM 11081 / NRC-1</strain>
        <plasmid>pNRC100</plasmid>
    </source>
</reference>
<reference key="16">
    <citation type="journal article" date="1995" name="Mol. Microbiol.">
        <title>Complementation studies with the gas vesicle-encoding p-vac region of Halobacterium salinarium PHH1 reveal a regulatory role for the p-gvpDE genes.</title>
        <authorList>
            <person name="Offner S."/>
            <person name="Pfeifer F."/>
        </authorList>
    </citation>
    <scope>FUNCTION</scope>
    <scope>DISRUPTION PHENOTYPE</scope>
    <source>
        <strain>PHH1</strain>
    </source>
</reference>
<reference key="17">
    <citation type="journal article" date="1996" name="J. Bacteriol.">
        <title>Functional studies of the gvpACNO operon of Halobacterium salinarium reveal that the GvpC protein shapes gas vesicles.</title>
        <authorList>
            <person name="Offner S."/>
            <person name="Wanner G."/>
            <person name="Pfeifer F."/>
        </authorList>
    </citation>
    <scope>SUBUNIT</scope>
    <source>
        <strain>PHH1</strain>
    </source>
</reference>
<reference key="18">
    <citation type="journal article" date="1997" name="Microbiology">
        <title>Growth competition between Halobacterium salinarium strain PHH1 and mutants affected in gas vesicle synthesis.</title>
        <authorList>
            <person name="Beard S.J."/>
            <person name="Hayes P.K."/>
            <person name="Walsby A.E."/>
        </authorList>
    </citation>
    <scope>FUNCTION IN BUOYANCY</scope>
    <scope>POSSIBLE INDUCTION BY OXYGEN LIMITATION</scope>
    <source>
        <strain>PHH1</strain>
    </source>
</reference>
<reference key="19">
    <citation type="journal article" date="1998" name="Microbiology">
        <title>Structural characteristics of halobacterial gas vesicles.</title>
        <authorList>
            <person name="Offner S."/>
            <person name="Ziese U."/>
            <person name="Wanner G."/>
            <person name="Typke D."/>
            <person name="Pfeifer F."/>
        </authorList>
    </citation>
    <scope>FUNCTION</scope>
    <scope>SUBUNIT</scope>
    <source>
        <strain>PHH1</strain>
    </source>
</reference>
<reference key="20">
    <citation type="journal article" date="2000" name="J. Bacteriol.">
        <title>Eight of fourteen gvp genes are sufficient for formation of gas vesicles in halophilic archaea.</title>
        <authorList>
            <person name="Offner S."/>
            <person name="Hofacker A."/>
            <person name="Wanner G."/>
            <person name="Pfeifer F."/>
        </authorList>
    </citation>
    <scope>DISRUPTION PHENOTYPE</scope>
    <source>
        <strain>PHH1</strain>
        <plasmid>pHH1</plasmid>
    </source>
</reference>
<reference key="21">
    <citation type="journal article" date="2001" name="J. Biotechnol.">
        <title>Antigen presentation using novel particulate organelles from halophilic archaea.</title>
        <authorList>
            <person name="Stuart E.S."/>
            <person name="Morshed F."/>
            <person name="Sremac M."/>
            <person name="DasSarma S."/>
        </authorList>
    </citation>
    <scope>BIOTECHNOLOGY (EPITOPE DISPLAY)</scope>
</reference>
<reference key="22">
    <citation type="journal article" date="2002" name="FEMS Microbiol. Lett.">
        <title>The sequence of the major gas vesicle protein, GvpA, influences the width and strength of halobacterial gas vesicles.</title>
        <authorList>
            <person name="Beard S.J."/>
            <person name="Hayes P.K."/>
            <person name="Pfeifer F."/>
            <person name="Walsby A.E."/>
        </authorList>
    </citation>
    <scope>FUNCTION</scope>
    <scope>MUTAGENESIS OF GLY-8; VAL-29 AND ALA-73</scope>
    <source>
        <strain>PHH1</strain>
        <plasmid>pHH1</plasmid>
    </source>
</reference>
<reference key="23">
    <citation type="journal article" date="2004" name="Biophys. J.">
        <title>Subunit structure of gas vesicles: a MALDI-TOF mass spectrometry study.</title>
        <authorList>
            <person name="Belenky M."/>
            <person name="Meyers R."/>
            <person name="Herzfeld J."/>
        </authorList>
    </citation>
    <scope>SUBCELLULAR LOCATION</scope>
    <scope>MASS SPECTROMETRY</scope>
    <scope>TOPOLOGY</scope>
    <source>
        <strain>II-7</strain>
    </source>
</reference>
<reference key="24">
    <citation type="journal article" date="2011" name="J. Proteome Res.">
        <title>New structural proteins of Halobacterium salinarum gas vesicle revealed by comparative proteomics analysis.</title>
        <authorList>
            <person name="Chu L.J."/>
            <person name="Chen M.C."/>
            <person name="Setter J."/>
            <person name="Tsai Y.S."/>
            <person name="Yang H."/>
            <person name="Fang X."/>
            <person name="Ting Y.S."/>
            <person name="Shaffer S.A."/>
            <person name="Taylor G.K."/>
            <person name="von Haller P.D."/>
            <person name="Goodlett D.R."/>
            <person name="Ng W.V."/>
        </authorList>
    </citation>
    <scope>PROTEIN ABUNDANCE</scope>
    <scope>SUBCELLULAR LOCATION</scope>
    <scope>IDENTIFICATION BY MASS SPECTROMETRY</scope>
    <source>
        <strain>ATCC 700922 / JCM 11081 / NRC-1</strain>
    </source>
</reference>
<reference key="25">
    <citation type="journal article" date="2011" name="Mol. Microbiol.">
        <title>Structural model of the gas vesicle protein GvpA and analysis of GvpA mutants in vivo.</title>
        <authorList>
            <person name="Strunk T."/>
            <person name="Hamacher K."/>
            <person name="Hoffgaard F."/>
            <person name="Engelhardt H."/>
            <person name="Zillig M.D."/>
            <person name="Faist K."/>
            <person name="Wenzel W."/>
            <person name="Pfeifer F."/>
        </authorList>
    </citation>
    <scope>FUNCTION</scope>
    <scope>POSSIBLE SUBUNIT</scope>
    <scope>SUBCELLULAR LOCATION</scope>
    <scope>DOMAIN</scope>
    <scope>STRUCTURAL MODEL</scope>
    <scope>MUTAGENESIS OF SER-6; SER-7; ARG-15; ILE-34; GLU-35; PHE-51; LYS-60; 66-LEU--ALA-76; 70-ALA--ALA-76 AND 72-PRO--ALA-76</scope>
</reference>
<reference key="26">
    <citation type="journal article" date="2012" name="J. Struct. Biol.">
        <title>Modeling of the major gas vesicle protein, GvpA: from protein sequence to vesicle wall structure.</title>
        <authorList>
            <person name="Ezzeldin H.M."/>
            <person name="Klauda J.B."/>
            <person name="Solares S.D."/>
        </authorList>
    </citation>
    <scope>MODELING</scope>
    <source>
        <strain>ATCC 700922 / JCM 11081 / NRC-1</strain>
    </source>
</reference>
<reference key="27">
    <citation type="journal article" date="2017" name="Mol. Microbiol.">
        <title>Mutations in the major gas vesicle protein GvpA and impacts on gas vesicle formation in Haloferax volcanii.</title>
        <authorList>
            <person name="Knitsch R."/>
            <person name="Schneefeld M."/>
            <person name="Weitzel K."/>
            <person name="Pfeifer F."/>
        </authorList>
    </citation>
    <scope>FUNCTION</scope>
    <scope>DOMAIN</scope>
    <scope>MUTAGENESIS OF ASP-5; ARG-15; LYS-19; GLY-20; ASP-24; ALA-27; ARG-28; GLY-33; GLU-40; HIS-53; TYR-54; GLU-57; LYS-60 AND ILE-61</scope>
    <source>
        <strain>PHH1</strain>
        <plasmid>pHH1</plasmid>
    </source>
</reference>
<reference key="28">
    <citation type="journal article" date="2020" name="Front. Microbiol.">
        <title>Accessory Gvp Proteins Form a Complex During Gas Vesicle Formation of Haloarchaea.</title>
        <authorList>
            <person name="Voelkner K."/>
            <person name="Jost A."/>
            <person name="Pfeifer F."/>
        </authorList>
    </citation>
    <scope>FUNCTION</scope>
    <scope>INTERACTION WITH GVPF1</scope>
    <scope>DOMAIN</scope>
    <scope>MUTAGENESIS OF ARG-15; LYS-19; GLY-20; ASP-24; ALA-27; ARG-28; GLY-33 AND GLU-40</scope>
    <source>
        <strain>PHH1</strain>
        <plasmid>pHH1</plasmid>
    </source>
</reference>
<reference key="29">
    <citation type="journal article" date="2021" name="Front. Microbiol.">
        <title>Effect of Mutations in GvpJ and GvpM on Gas Vesicle Formation of Halobacterium salinarum.</title>
        <authorList>
            <person name="Jost A."/>
            <person name="Knitsch R."/>
            <person name="Voelkner K."/>
            <person name="Pfeifer F."/>
        </authorList>
    </citation>
    <scope>INTERACTION WITH GVPF1</scope>
    <scope>DOMAIN</scope>
    <source>
        <strain>PHH1</strain>
        <plasmid>pHH1</plasmid>
    </source>
</reference>
<reference key="30">
    <citation type="journal article" date="2022" name="Front. Microbiol.">
        <title>Interaction of the gas vesicle proteins GvpA, GvpC, GvpN, and GvpO of Halobacterium salinarum.</title>
        <authorList>
            <person name="Jost A."/>
            <person name="Pfeifer F."/>
        </authorList>
    </citation>
    <scope>SUBUNIT</scope>
    <source>
        <strain>PHH1</strain>
        <plasmid>pHH1</plasmid>
    </source>
</reference>
<feature type="initiator methionine" description="Removed" evidence="7 15 23">
    <location>
        <position position="1"/>
    </location>
</feature>
<feature type="chain" id="PRO_0000199993" description="Gas vesicle protein A1">
    <location>
        <begin position="2"/>
        <end position="76"/>
    </location>
</feature>
<feature type="region of interest" description="Binds to GvpF1" evidence="18">
    <location>
        <begin position="1"/>
        <end position="22"/>
    </location>
</feature>
<feature type="region of interest" description="Binds to GvpF1" evidence="14">
    <location>
        <begin position="2"/>
        <end position="43"/>
    </location>
</feature>
<feature type="region of interest" description="Alpha helix 1" evidence="30 32">
    <location>
        <begin position="9"/>
        <end position="19"/>
    </location>
</feature>
<feature type="region of interest" description="Beta-strand 1" evidence="30 32">
    <location>
        <begin position="23"/>
        <end position="31"/>
    </location>
</feature>
<feature type="region of interest" description="Beta turn" evidence="30 32">
    <location>
        <begin position="32"/>
        <end position="34"/>
    </location>
</feature>
<feature type="region of interest" description="Beta-strand 2" evidence="30 32">
    <location>
        <begin position="35"/>
        <end position="43"/>
    </location>
</feature>
<feature type="region of interest" description="Alpha helix 2" evidence="30 32">
    <location>
        <begin position="48"/>
        <end position="67"/>
    </location>
</feature>
<feature type="mutagenesis site" description="Mini gas vesicles." evidence="12">
    <original>D</original>
    <variation>A</variation>
    <location>
        <position position="5"/>
    </location>
</feature>
<feature type="mutagenesis site" description="Normal gas vesicles." evidence="10">
    <original>S</original>
    <variation>A</variation>
    <location>
        <position position="6"/>
    </location>
</feature>
<feature type="mutagenesis site" description="Normal gas vesicles." evidence="10">
    <original>S</original>
    <variation>A</variation>
    <location>
        <position position="7"/>
    </location>
</feature>
<feature type="mutagenesis site" description="CCP increases to 0.82 MPa, makes a few very narrow gas vesicles." evidence="4">
    <original>G</original>
    <variation>S</variation>
    <location>
        <position position="8"/>
    </location>
</feature>
<feature type="mutagenesis site" description="No gas vesicles. Decreased interaction with GvpF1." evidence="10 14">
    <original>R</original>
    <variation>A</variation>
    <location>
        <position position="15"/>
    </location>
</feature>
<feature type="mutagenesis site" description="No gas vesicles." evidence="10 12">
    <original>R</original>
    <variation>E</variation>
    <variation>F</variation>
    <variation>G</variation>
    <variation>H</variation>
    <variation>I</variation>
    <variation>K</variation>
    <variation>N</variation>
    <variation>P</variation>
    <variation>S</variation>
    <location>
        <position position="15"/>
    </location>
</feature>
<feature type="mutagenesis site" description="Decreased interaction with GvpF1. No gas vesicles." evidence="12 14">
    <original>K</original>
    <variation>D</variation>
    <location>
        <position position="19"/>
    </location>
</feature>
<feature type="mutagenesis site" description="Greatly decreased interaction with GvpF1. No gas vesicles." evidence="12 14">
    <original>G</original>
    <variation>A</variation>
    <variation>D</variation>
    <location>
        <position position="20"/>
    </location>
</feature>
<feature type="mutagenesis site" description="Greatly decreased interaction with GvpF1. Cylindrical gas vesicles." evidence="12 14">
    <original>D</original>
    <variation>A</variation>
    <location>
        <position position="24"/>
    </location>
</feature>
<feature type="mutagenesis site" description="Makes short and cylindrical gas vesicles." evidence="12">
    <original>D</original>
    <variation>R</variation>
    <location>
        <position position="24"/>
    </location>
</feature>
<feature type="mutagenesis site" description="Greatly decreased interaction with GvpF1. No gas vesicles." evidence="12 14">
    <original>D</original>
    <variation>Y</variation>
    <location>
        <position position="24"/>
    </location>
</feature>
<feature type="mutagenesis site" description="Decreased interaction with GvpF1. No gas vesicles." evidence="12 14">
    <original>A</original>
    <variation>E</variation>
    <location>
        <position position="27"/>
    </location>
</feature>
<feature type="mutagenesis site" description="Greatly decreased interaction with GvpF1. Mini gas vesicles." evidence="12 14">
    <original>R</original>
    <variation>A</variation>
    <location>
        <position position="28"/>
    </location>
</feature>
<feature type="mutagenesis site" description="Greatly decreased interaction with GvpF1. No gas vesicles." evidence="12 14">
    <original>R</original>
    <variation>D</variation>
    <location>
        <position position="28"/>
    </location>
</feature>
<feature type="mutagenesis site" description="CCP increases to 0.82 MPa, makes irregularly shaped gas vesicles." evidence="4">
    <original>V</original>
    <variation>I</variation>
    <location>
        <position position="29"/>
    </location>
</feature>
<feature type="mutagenesis site" description="Decreased interaction with GvpF1. No gas vesicles." evidence="12 14">
    <original>G</original>
    <variation>V</variation>
    <location>
        <position position="33"/>
    </location>
</feature>
<feature type="mutagenesis site" description="Makes very long thin gas vesicles, cells do not float." evidence="10">
    <original>I</original>
    <variation>M</variation>
    <location>
        <position position="34"/>
    </location>
</feature>
<feature type="mutagenesis site" description="Makes thinner than normal gas vesicles, cells do not float." evidence="10">
    <original>E</original>
    <variation>A</variation>
    <location>
        <position position="35"/>
    </location>
</feature>
<feature type="mutagenesis site" description="Greatly decreased interaction with GvpF1. No gas vesicles." evidence="12 14">
    <original>E</original>
    <variation>A</variation>
    <location>
        <position position="40"/>
    </location>
</feature>
<feature type="mutagenesis site" description="Gas vesicles are weak, cells do not float." evidence="10">
    <original>F</original>
    <variation>Y</variation>
    <location>
        <position position="51"/>
    </location>
</feature>
<feature type="mutagenesis site" description="No gas vesicles." evidence="12">
    <original>H</original>
    <variation>A</variation>
    <location>
        <position position="53"/>
    </location>
</feature>
<feature type="mutagenesis site" description="No gas vesicles." evidence="12">
    <original>Y</original>
    <variation>A</variation>
    <variation>E</variation>
    <variation>S</variation>
    <variation>R</variation>
    <location>
        <position position="54"/>
    </location>
</feature>
<feature type="mutagenesis site" description="Mixed spindle-shaped and cylindrical gas vesicles." evidence="12">
    <original>Y</original>
    <variation>W</variation>
    <variation>F</variation>
    <location>
        <position position="54"/>
    </location>
</feature>
<feature type="mutagenesis site" description="Mini gas vesicles." evidence="12">
    <original>E</original>
    <variation>A</variation>
    <location>
        <position position="57"/>
    </location>
</feature>
<feature type="mutagenesis site" description="Mini gas vesicles." evidence="12">
    <original>K</original>
    <variation>A</variation>
    <location>
        <position position="60"/>
    </location>
</feature>
<feature type="mutagenesis site" description="Cells make very small gas vesicles after 7 days, cells do not float." evidence="10">
    <original>K</original>
    <variation>L</variation>
    <location>
        <position position="60"/>
    </location>
</feature>
<feature type="mutagenesis site" description="Mini gas vesicles." evidence="12">
    <original>I</original>
    <variation>A</variation>
    <location>
        <position position="61"/>
    </location>
</feature>
<feature type="mutagenesis site" description="Cells make very small gas vesicles after 7 weeks, protein is present in the cell." evidence="10">
    <location>
        <begin position="66"/>
        <end position="76"/>
    </location>
</feature>
<feature type="mutagenesis site" description="Cells make normal gas vesicles." evidence="10">
    <location>
        <begin position="70"/>
        <end position="76"/>
    </location>
</feature>
<feature type="mutagenesis site" description="Cells make normal gas vesicles." evidence="10">
    <location>
        <begin position="72"/>
        <end position="76"/>
    </location>
</feature>
<feature type="mutagenesis site" description="CCP increases to 0.89 MPa." evidence="4">
    <original>A</original>
    <variation>PEPA</variation>
    <location>
        <position position="73"/>
    </location>
</feature>
<feature type="sequence conflict" description="In Ref. 1; CAA68593." evidence="29" ref="1">
    <original>EAAPE</original>
    <variation>RRHPRPDAQASLRP</variation>
    <location>
        <begin position="71"/>
        <end position="75"/>
    </location>
</feature>
<protein>
    <recommendedName>
        <fullName evidence="1">Gas vesicle protein A1</fullName>
        <shortName evidence="28">GVP</shortName>
        <shortName evidence="25">GVP-A</shortName>
        <shortName evidence="1">GvpA1</shortName>
    </recommendedName>
</protein>